<accession>B1IXT3</accession>
<proteinExistence type="inferred from homology"/>
<organism>
    <name type="scientific">Escherichia coli (strain ATCC 8739 / DSM 1576 / NBRC 3972 / NCIMB 8545 / WDCM 00012 / Crooks)</name>
    <dbReference type="NCBI Taxonomy" id="481805"/>
    <lineage>
        <taxon>Bacteria</taxon>
        <taxon>Pseudomonadati</taxon>
        <taxon>Pseudomonadota</taxon>
        <taxon>Gammaproteobacteria</taxon>
        <taxon>Enterobacterales</taxon>
        <taxon>Enterobacteriaceae</taxon>
        <taxon>Escherichia</taxon>
    </lineage>
</organism>
<reference key="1">
    <citation type="submission" date="2008-02" db="EMBL/GenBank/DDBJ databases">
        <title>Complete sequence of Escherichia coli C str. ATCC 8739.</title>
        <authorList>
            <person name="Copeland A."/>
            <person name="Lucas S."/>
            <person name="Lapidus A."/>
            <person name="Glavina del Rio T."/>
            <person name="Dalin E."/>
            <person name="Tice H."/>
            <person name="Bruce D."/>
            <person name="Goodwin L."/>
            <person name="Pitluck S."/>
            <person name="Kiss H."/>
            <person name="Brettin T."/>
            <person name="Detter J.C."/>
            <person name="Han C."/>
            <person name="Kuske C.R."/>
            <person name="Schmutz J."/>
            <person name="Larimer F."/>
            <person name="Land M."/>
            <person name="Hauser L."/>
            <person name="Kyrpides N."/>
            <person name="Mikhailova N."/>
            <person name="Ingram L."/>
            <person name="Richardson P."/>
        </authorList>
    </citation>
    <scope>NUCLEOTIDE SEQUENCE [LARGE SCALE GENOMIC DNA]</scope>
    <source>
        <strain>ATCC 8739 / DSM 1576 / NBRC 3972 / NCIMB 8545 / WDCM 00012 / Crooks</strain>
    </source>
</reference>
<feature type="chain" id="PRO_1000085378" description="Undecaprenyl-phosphate 4-deoxy-4-formamido-L-arabinose transferase">
    <location>
        <begin position="1"/>
        <end position="322"/>
    </location>
</feature>
<feature type="topological domain" description="Cytoplasmic" evidence="1">
    <location>
        <begin position="1"/>
        <end position="235"/>
    </location>
</feature>
<feature type="transmembrane region" description="Helical" evidence="1">
    <location>
        <begin position="236"/>
        <end position="256"/>
    </location>
</feature>
<feature type="topological domain" description="Periplasmic" evidence="1">
    <location>
        <begin position="257"/>
        <end position="269"/>
    </location>
</feature>
<feature type="transmembrane region" description="Helical" evidence="1">
    <location>
        <begin position="270"/>
        <end position="290"/>
    </location>
</feature>
<feature type="topological domain" description="Cytoplasmic" evidence="1">
    <location>
        <begin position="291"/>
        <end position="322"/>
    </location>
</feature>
<protein>
    <recommendedName>
        <fullName evidence="1">Undecaprenyl-phosphate 4-deoxy-4-formamido-L-arabinose transferase</fullName>
        <ecNumber evidence="1">2.4.2.53</ecNumber>
    </recommendedName>
    <alternativeName>
        <fullName evidence="1">Undecaprenyl-phosphate Ara4FN transferase</fullName>
        <shortName evidence="1">Ara4FN transferase</shortName>
    </alternativeName>
</protein>
<dbReference type="EC" id="2.4.2.53" evidence="1"/>
<dbReference type="EMBL" id="CP000946">
    <property type="protein sequence ID" value="ACA77059.1"/>
    <property type="molecule type" value="Genomic_DNA"/>
</dbReference>
<dbReference type="RefSeq" id="WP_000461657.1">
    <property type="nucleotide sequence ID" value="NZ_MTFT01000028.1"/>
</dbReference>
<dbReference type="SMR" id="B1IXT3"/>
<dbReference type="CAZy" id="GT2">
    <property type="family name" value="Glycosyltransferase Family 2"/>
</dbReference>
<dbReference type="GeneID" id="93774920"/>
<dbReference type="KEGG" id="ecl:EcolC_1395"/>
<dbReference type="HOGENOM" id="CLU_033536_0_0_6"/>
<dbReference type="UniPathway" id="UPA00030"/>
<dbReference type="UniPathway" id="UPA00036">
    <property type="reaction ID" value="UER00495"/>
</dbReference>
<dbReference type="GO" id="GO:0005886">
    <property type="term" value="C:plasma membrane"/>
    <property type="evidence" value="ECO:0007669"/>
    <property type="project" value="UniProtKB-SubCell"/>
</dbReference>
<dbReference type="GO" id="GO:0016780">
    <property type="term" value="F:phosphotransferase activity, for other substituted phosphate groups"/>
    <property type="evidence" value="ECO:0007669"/>
    <property type="project" value="UniProtKB-UniRule"/>
</dbReference>
<dbReference type="GO" id="GO:0099621">
    <property type="term" value="F:undecaprenyl-phosphate 4-deoxy-4-formamido-L-arabinose transferase activity"/>
    <property type="evidence" value="ECO:0007669"/>
    <property type="project" value="UniProtKB-EC"/>
</dbReference>
<dbReference type="GO" id="GO:0036108">
    <property type="term" value="P:4-amino-4-deoxy-alpha-L-arabinopyranosyl undecaprenyl phosphate biosynthetic process"/>
    <property type="evidence" value="ECO:0007669"/>
    <property type="project" value="UniProtKB-UniRule"/>
</dbReference>
<dbReference type="GO" id="GO:0009245">
    <property type="term" value="P:lipid A biosynthetic process"/>
    <property type="evidence" value="ECO:0007669"/>
    <property type="project" value="UniProtKB-UniRule"/>
</dbReference>
<dbReference type="GO" id="GO:0009103">
    <property type="term" value="P:lipopolysaccharide biosynthetic process"/>
    <property type="evidence" value="ECO:0007669"/>
    <property type="project" value="UniProtKB-UniRule"/>
</dbReference>
<dbReference type="GO" id="GO:0046677">
    <property type="term" value="P:response to antibiotic"/>
    <property type="evidence" value="ECO:0007669"/>
    <property type="project" value="UniProtKB-KW"/>
</dbReference>
<dbReference type="CDD" id="cd04187">
    <property type="entry name" value="DPM1_like_bac"/>
    <property type="match status" value="1"/>
</dbReference>
<dbReference type="FunFam" id="3.90.550.10:FF:000019">
    <property type="entry name" value="Undecaprenyl-phosphate 4-deoxy-4-formamido-L-arabinose transferase"/>
    <property type="match status" value="1"/>
</dbReference>
<dbReference type="Gene3D" id="3.90.550.10">
    <property type="entry name" value="Spore Coat Polysaccharide Biosynthesis Protein SpsA, Chain A"/>
    <property type="match status" value="1"/>
</dbReference>
<dbReference type="HAMAP" id="MF_01164">
    <property type="entry name" value="ArnC_transfer"/>
    <property type="match status" value="1"/>
</dbReference>
<dbReference type="InterPro" id="IPR022857">
    <property type="entry name" value="ArnC_tfrase"/>
</dbReference>
<dbReference type="InterPro" id="IPR001173">
    <property type="entry name" value="Glyco_trans_2-like"/>
</dbReference>
<dbReference type="InterPro" id="IPR050256">
    <property type="entry name" value="Glycosyltransferase_2"/>
</dbReference>
<dbReference type="InterPro" id="IPR029044">
    <property type="entry name" value="Nucleotide-diphossugar_trans"/>
</dbReference>
<dbReference type="NCBIfam" id="NF007986">
    <property type="entry name" value="PRK10714.1"/>
    <property type="match status" value="1"/>
</dbReference>
<dbReference type="PANTHER" id="PTHR48090:SF3">
    <property type="entry name" value="UNDECAPRENYL-PHOSPHATE 4-DEOXY-4-FORMAMIDO-L-ARABINOSE TRANSFERASE"/>
    <property type="match status" value="1"/>
</dbReference>
<dbReference type="PANTHER" id="PTHR48090">
    <property type="entry name" value="UNDECAPRENYL-PHOSPHATE 4-DEOXY-4-FORMAMIDO-L-ARABINOSE TRANSFERASE-RELATED"/>
    <property type="match status" value="1"/>
</dbReference>
<dbReference type="Pfam" id="PF00535">
    <property type="entry name" value="Glycos_transf_2"/>
    <property type="match status" value="1"/>
</dbReference>
<dbReference type="SUPFAM" id="SSF53448">
    <property type="entry name" value="Nucleotide-diphospho-sugar transferases"/>
    <property type="match status" value="1"/>
</dbReference>
<evidence type="ECO:0000255" key="1">
    <source>
        <dbReference type="HAMAP-Rule" id="MF_01164"/>
    </source>
</evidence>
<name>ARNC_ECOLC</name>
<gene>
    <name evidence="1" type="primary">arnC</name>
    <name type="ordered locus">EcolC_1395</name>
</gene>
<comment type="function">
    <text evidence="1">Catalyzes the transfer of 4-deoxy-4-formamido-L-arabinose from UDP to undecaprenyl phosphate. The modified arabinose is attached to lipid A and is required for resistance to polymyxin and cationic antimicrobial peptides.</text>
</comment>
<comment type="catalytic activity">
    <reaction evidence="1">
        <text>UDP-4-deoxy-4-formamido-beta-L-arabinose + di-trans,octa-cis-undecaprenyl phosphate = 4-deoxy-4-formamido-alpha-L-arabinopyranosyl di-trans,octa-cis-undecaprenyl phosphate + UDP</text>
        <dbReference type="Rhea" id="RHEA:27722"/>
        <dbReference type="ChEBI" id="CHEBI:58223"/>
        <dbReference type="ChEBI" id="CHEBI:58709"/>
        <dbReference type="ChEBI" id="CHEBI:58909"/>
        <dbReference type="ChEBI" id="CHEBI:60392"/>
        <dbReference type="EC" id="2.4.2.53"/>
    </reaction>
</comment>
<comment type="pathway">
    <text evidence="1">Glycolipid biosynthesis; 4-amino-4-deoxy-alpha-L-arabinose undecaprenyl phosphate biosynthesis; 4-amino-4-deoxy-alpha-L-arabinose undecaprenyl phosphate from UDP-4-deoxy-4-formamido-beta-L-arabinose and undecaprenyl phosphate: step 1/2.</text>
</comment>
<comment type="pathway">
    <text evidence="1">Bacterial outer membrane biogenesis; lipopolysaccharide biosynthesis.</text>
</comment>
<comment type="subcellular location">
    <subcellularLocation>
        <location evidence="1">Cell inner membrane</location>
        <topology evidence="1">Multi-pass membrane protein</topology>
    </subcellularLocation>
</comment>
<comment type="similarity">
    <text evidence="1">Belongs to the glycosyltransferase 2 family.</text>
</comment>
<sequence length="322" mass="36339">MFEIHPVKKVSVVIPVYNEQESLPELIRRTTTACESLGKEYEILLIDDGSSDNSAHMLVEASQAENSHIVSILLNRNYGQHSAIMAGFSHVTGDLIITLDADLQNPPEEIPRLVAKADEGYDVVGTVRQNRQDSWFRKTASKMINRLIQRTTGKAMGDYGCMLRAYRRHIVDAMLHCHERSTFIPILANIFARRAIEIPVHHAEREFGESKYSFMRLINLMYDLVTCLTTTPLRMLSLLGSIIAIGGFSIAVLLVILRLTFGPQWAAEGVFMLFAVLFTFIGAQFIGMGLLGEYIGRIYTDVRARPRYFVQQVIRPSSKENE</sequence>
<keyword id="KW-0046">Antibiotic resistance</keyword>
<keyword id="KW-0997">Cell inner membrane</keyword>
<keyword id="KW-1003">Cell membrane</keyword>
<keyword id="KW-0328">Glycosyltransferase</keyword>
<keyword id="KW-0441">Lipid A biosynthesis</keyword>
<keyword id="KW-0444">Lipid biosynthesis</keyword>
<keyword id="KW-0443">Lipid metabolism</keyword>
<keyword id="KW-0448">Lipopolysaccharide biosynthesis</keyword>
<keyword id="KW-0472">Membrane</keyword>
<keyword id="KW-0808">Transferase</keyword>
<keyword id="KW-0812">Transmembrane</keyword>
<keyword id="KW-1133">Transmembrane helix</keyword>